<reference key="1">
    <citation type="journal article" date="2011" name="Genome Res.">
        <title>Comparative genomics of citric-acid-producing Aspergillus niger ATCC 1015 versus enzyme-producing CBS 513.88.</title>
        <authorList>
            <person name="Andersen M.R."/>
            <person name="Salazar M.P."/>
            <person name="Schaap P.J."/>
            <person name="van de Vondervoort P.J.I."/>
            <person name="Culley D."/>
            <person name="Thykaer J."/>
            <person name="Frisvad J.C."/>
            <person name="Nielsen K.F."/>
            <person name="Albang R."/>
            <person name="Albermann K."/>
            <person name="Berka R.M."/>
            <person name="Braus G.H."/>
            <person name="Braus-Stromeyer S.A."/>
            <person name="Corrochano L.M."/>
            <person name="Dai Z."/>
            <person name="van Dijck P.W.M."/>
            <person name="Hofmann G."/>
            <person name="Lasure L.L."/>
            <person name="Magnuson J.K."/>
            <person name="Menke H."/>
            <person name="Meijer M."/>
            <person name="Meijer S.L."/>
            <person name="Nielsen J.B."/>
            <person name="Nielsen M.L."/>
            <person name="van Ooyen A.J.J."/>
            <person name="Pel H.J."/>
            <person name="Poulsen L."/>
            <person name="Samson R.A."/>
            <person name="Stam H."/>
            <person name="Tsang A."/>
            <person name="van den Brink J.M."/>
            <person name="Atkins A."/>
            <person name="Aerts A."/>
            <person name="Shapiro H."/>
            <person name="Pangilinan J."/>
            <person name="Salamov A."/>
            <person name="Lou Y."/>
            <person name="Lindquist E."/>
            <person name="Lucas S."/>
            <person name="Grimwood J."/>
            <person name="Grigoriev I.V."/>
            <person name="Kubicek C.P."/>
            <person name="Martinez D."/>
            <person name="van Peij N.N.M.E."/>
            <person name="Roubos J.A."/>
            <person name="Nielsen J."/>
            <person name="Baker S.E."/>
        </authorList>
    </citation>
    <scope>NUCLEOTIDE SEQUENCE [LARGE SCALE GENOMIC DNA]</scope>
    <source>
        <strain>ATCC 1015 / CBS 113.46 / FGSC A1144 / LSHB Ac4 / NCTC 3858a / NRRL 328 / USDA 3528.7</strain>
    </source>
</reference>
<reference key="2">
    <citation type="journal article" date="2012" name="Chem. Biol.">
        <title>Characterization of a silent azaphilone gene cluster from Aspergillus niger ATCC 1015 reveals a hydroxylation-mediated pyran-ring formation.</title>
        <authorList>
            <person name="Zabala A.O."/>
            <person name="Xu W."/>
            <person name="Chooi Y.H."/>
            <person name="Tang Y."/>
        </authorList>
    </citation>
    <scope>FUNCTION</scope>
    <scope>CATALYTIC ACTIVITY</scope>
    <scope>DOMAIN</scope>
    <scope>INDUCTION</scope>
</reference>
<name>AZAB_ASPNA</name>
<comment type="function">
    <text evidence="5">Highly reducing polyketide synthase; part of the gene cluster that mediates the biosynthesis of azaphilones, a class of fungal metabolites characterized by a highly oxygenated pyrano-quinone bicyclic core and exhibiting a broad range of bioactivities (PubMed:22921072). In the first step, the non-reducing polyketide synthase azaA forms the hexaketide precursor from successive condensations of five malonyl-CoA units, presumably with a simple acetyl-CoA starter unit (PubMed:22921072). The reactive polyketide chain then undergoes a PT-mediated C2-C7 cyclization to afford the aromatic ring and is eventually released as an aldehyde through the R-domain (PubMed:22921072). The putative ketoreductase azaE is proposed to catalyze the reduction of the terminal ketone resulting in the early culture product FK17-P2a (PubMed:22921072). The monooxygenase azaH was demonstrated to be the only enzyme required to convert FK17-P2a to azanigerone E (PubMed:22921072). AzaH first hydroxylates the benzaldehyde intermediate FK17-P2a at C4, which triggers the formation of the pyran-ring to afford azanigerone E (PubMed:22921072). In parallel, the 2,4-dimethylhexanoyl chain is synthesized by the HR-PKS azaB and is proposed to be transferred to the C4-hydroxyl of azanigerone E by the acyltransferase azaD directly from the ACP domain of azaB (PubMed:22921072). Alternatively, the 2,4-dimethyl-hexanoyl chain may be offloaded from the HR-PKS as a carboxylic acid and converted to an acyl-CoA by azaF (PubMed:22921072). The resulting acyl-CoA molecule could then be taken up as a substrate by AzaD to form azanigerone B (PubMed:22921072). To yield the carboxylic acid substituent in azanigerone A, the hydroxypropyl side chain of azanigerone B would need to undergo a C-C oxidative cleavage catalyzed by cytochrome P450 AzaI (PubMed:22921072). AzaI is proposed to act on a vicinal diol that leads to a C-C bond scission either through an alkoxyradical intermediate or a peroxy complex (PubMed:22921072). In the biosynthesis of azanigerone A, azanigerone B first undergoes hydroxylation at C10, possibly catalyzed by one of the two FAD-dependent monooxygenases encoded in the cluster, azaG or azaL, resulting in the vicinal diol azanigerone C (PubMed:22921072). Oxidative cleavage of azanigerone C by azaI would yield the corresponding aldehyde derivative of azanigerone A (PubMed:22921072). Finally, the dehydrogenase azaJ is proposed to convert the aldehyde functional group into the carboxylic acid, completing the conversion from azanigerone B to azanigerone A (PubMed:22921072). Alternatively, the oxidation of aldehyde to carboxylic acid may be catalyzed by the same P450 enzyme azaI via consecutive oxidation or by endogenous alcohol dehydrogenase (PubMed:22921072).</text>
</comment>
<comment type="pathway">
    <text evidence="5">Secondary metabolite biosynthesis.</text>
</comment>
<comment type="induction">
    <text evidence="5">Expression is under the control of the azaphilone cluster-specific transcription factor azaR (PubMed:22921072).</text>
</comment>
<comment type="domain">
    <text evidence="7">Multidomain protein; including a ketosynthase (KS) that catalyzes repeated decarboxylative condensation to elongate the polyketide backbone; a malonyl-CoA:ACP transacylase (MAT) that selects and transfers the extender unit malonyl-CoA; a dehydratase (DH) domain that reduces hydroxyl groups to enoyl groups; a methyltransferase (CMeT) domain responsible for the incorporation of methyl groups; an enoylreductase (ER) domain that reduces enoyl groups to alkyl group; a ketoreductase (KR) domain that catalyzes beta-ketoreduction steps; and an acyl-carrier protein (ACP) that serves as the tether of the growing and completed polyketide via its phosphopantetheinyl arm.</text>
</comment>
<keyword id="KW-0012">Acyltransferase</keyword>
<keyword id="KW-0489">Methyltransferase</keyword>
<keyword id="KW-0511">Multifunctional enzyme</keyword>
<keyword id="KW-0521">NADP</keyword>
<keyword id="KW-0560">Oxidoreductase</keyword>
<keyword id="KW-0596">Phosphopantetheine</keyword>
<keyword id="KW-0597">Phosphoprotein</keyword>
<keyword id="KW-0808">Transferase</keyword>
<accession>G3XMD1</accession>
<gene>
    <name evidence="6" type="primary">azaB</name>
    <name type="ORF">ASPNIDRAFT_188817</name>
</gene>
<evidence type="ECO:0000255" key="1"/>
<evidence type="ECO:0000255" key="2">
    <source>
        <dbReference type="PROSITE-ProRule" id="PRU00258"/>
    </source>
</evidence>
<evidence type="ECO:0000255" key="3">
    <source>
        <dbReference type="PROSITE-ProRule" id="PRU01348"/>
    </source>
</evidence>
<evidence type="ECO:0000255" key="4">
    <source>
        <dbReference type="PROSITE-ProRule" id="PRU01363"/>
    </source>
</evidence>
<evidence type="ECO:0000269" key="5">
    <source>
    </source>
</evidence>
<evidence type="ECO:0000303" key="6">
    <source>
    </source>
</evidence>
<evidence type="ECO:0000305" key="7">
    <source>
    </source>
</evidence>
<feature type="chain" id="PRO_0000437589" description="Highly reducing polyketide synthase azaB">
    <location>
        <begin position="1"/>
        <end position="2533"/>
    </location>
</feature>
<feature type="domain" description="Ketosynthase family 3 (KS3)" evidence="3 7">
    <location>
        <begin position="7"/>
        <end position="433"/>
    </location>
</feature>
<feature type="domain" description="PKS/mFAS DH" evidence="4">
    <location>
        <begin position="946"/>
        <end position="1254"/>
    </location>
</feature>
<feature type="domain" description="Carrier" evidence="2 7">
    <location>
        <begin position="2455"/>
        <end position="2532"/>
    </location>
</feature>
<feature type="region of interest" description="Malonyl-CoA:ACP transacylase (MAT) domain" evidence="1 7">
    <location>
        <begin position="554"/>
        <end position="821"/>
    </location>
</feature>
<feature type="region of interest" description="N-terminal hotdog fold" evidence="4">
    <location>
        <begin position="946"/>
        <end position="1081"/>
    </location>
</feature>
<feature type="region of interest" description="Dehydratase (DH) domain" evidence="1 7">
    <location>
        <begin position="947"/>
        <end position="1251"/>
    </location>
</feature>
<feature type="region of interest" description="C-terminal hotdog fold" evidence="4">
    <location>
        <begin position="1097"/>
        <end position="1254"/>
    </location>
</feature>
<feature type="region of interest" description="Methyltransferase (CMet) domain" evidence="1 7">
    <location>
        <begin position="1419"/>
        <end position="1554"/>
    </location>
</feature>
<feature type="region of interest" description="Enoyl reductase (ER) domain" evidence="1 7">
    <location>
        <begin position="1839"/>
        <end position="2155"/>
    </location>
</feature>
<feature type="region of interest" description="Ketoreductase (KR) domain" evidence="1 7">
    <location>
        <begin position="2178"/>
        <end position="2349"/>
    </location>
</feature>
<feature type="active site" description="For beta-ketoacyl synthase activity" evidence="3">
    <location>
        <position position="180"/>
    </location>
</feature>
<feature type="active site" description="For beta-ketoacyl synthase activity" evidence="3">
    <location>
        <position position="315"/>
    </location>
</feature>
<feature type="active site" description="For beta-ketoacyl synthase activity" evidence="3">
    <location>
        <position position="355"/>
    </location>
</feature>
<feature type="active site" description="Proton acceptor; for dehydratase activity" evidence="4">
    <location>
        <position position="978"/>
    </location>
</feature>
<feature type="active site" description="Proton donor; for dehydratase activity" evidence="4">
    <location>
        <position position="1163"/>
    </location>
</feature>
<feature type="modified residue" description="O-(pantetheine 4'-phosphoryl)serine" evidence="2">
    <location>
        <position position="2492"/>
    </location>
</feature>
<sequence>MAGEYSTAPMAIIGMACRFSGGATSPEKLWDMIVQRRSGWSEIPTSRFNANGLYHPNGERVGTTHVKGGHFLEDDIACFDAAFFGMASETASAMDPQYRMELEVVYEALESAGIPMESIKGTNTSVYGGVMFRDYHDTHSRDLDTLPRYFMTGNAATMASNRISHFYDLRGPSMTVDTGCSTSLTALHLACQNLRSGESNMSIVTGASLMINPDVFLSMSNIGFLSPDGISYAFDSRANGYGRGEGVGALLVKRLDDALRDGDSIRAIIRETGVNQNGKTPSITAPQQAAQEALIRQCYERVNLDPAQTTYVEAHGTGTPAGDPLEVGALAAALGGSRSAEHPLYLGSIKANIGHTEAASGVASIIKVALALEKGQIPPNTQLNTPNSELRLNDRNMEVPVSTQRWPVGKGPRRASVNNFGFGGSNAHAILESPPVENGANRTNGQLKSNGPVVNGNKTNITKRETPWVFRLSAKDAQTCQQMAADLSTYIESHPPVDEEAFLGRLAYTLGSRRSVFSWTAAVSARSLAELTRALDDDERLVPSRAAPSLRLGWVFTGQGAQWYAMGRELIATYPVFRSTILECDRYMTEMGSTWTLMEELHREESTSQVNNIVYSLGLATAIQIALVELLWSWGIHPTAVTGHSSGEIAAAYASKALDMKSAIGIAYLRGVLAEKFDDKILGKGGMMAVGLGRKPVEHYLSRVTAGYCVVACVNSQYSVTISGDIPAIDQLEQLLQEDQVFARRLRVNGAFHCEQMRPMADLFDWSLRYLLTPHPDFGSVLFSSPKTGSRIQDGTILATSSHWVGNMLQAVEFESSFRHMCFGDPSPKGAKGTQDVDLVLEIGPHGALGGPIQQLMTLPEFEGSGISYLPTLVRKQDAVFAMQRLAIDLTHRGYPVDLNAVNFPHGTLSLSILHDLPSYPWNHSTRYWLEPRRNRADRQRQAPPSDLVGYSQPSITPLARTWRHIIRLSDLPWLGDHRVQSSIVFPGAGLVSMAIEGMRQVAAGRQQTVSAYELRDVDIAKALTVPEADEGVEVQLNIRPCDEQMLGTKDWLAFQIFSVSGDSRWTEHCSGRISVITTSDSTPLPSAIPSQSEDLYNRRIDPRYMWAAMRSVGIYHGPLFQNIHQVLAKPSASRTIFAIADTAAVMPKKYQTPHVLHPTTLDSVFQAAYTLLPESGARLPSAMVPRHIRSVRVSAQISNSPAHELEAYATLNRDYDAQSFETSLTVVDAKDGNSPVLEVDGLTCQSLGRALDREADPHENEICSRWEWAPDIGTLDAAACKDRIRCAPEAAEIETMRDLRRATILYILDIVSSLTVADVQQLRGHLKKFYVWMVEQLKKASRNQFAPDSAQWRDISAADKAALYEKVGRTSVNGEMLCRLGPLGASFLRQEMAPLEVMLENRLLFRYYLEALKWDRSTRQVSELVRLCTHKNPRAKILEIGAGTGGGTQVILEALGKENGSSTGARFGRYDFTDISAGFFEAAKERFQDWADLMNFQKLDIEHDPVAQGFEEGSYDVVIACQVLHATKSMDRTLTHVRKLLKPGGKLILMETTRDELDVFFAFGLLPGWWLSEEEERRTTPSLTLPFWNQVLSRNGFAGLDLEVHDCDSEEFYAFSTILSTAQAPALSITSPVTIVTGTSPPPTSWMSELQTAVAAHIGCQPVIATLETVTPQGNICIFLGEADEPLLDHVSNPVEFDRIIHLATRCKGLLWITRGGSLDVDKPAMSLSQGLLRTLKSEYQGKSFVSLDVDPRRSPWTAEVVQAISQIFPASFSETTDPATCEFEYAERDGVLHIPRTVKDIPMNRNIFPESDTTEKTIHCRFRDAARPLRMKIGTPGLIDTLVFHDDLDAKSDPLPADWIEFDPTAFGLNFRDVMVAMGQLEANAIMGFECAGTIVRLGATAAAKGFAVGDRVCTLLRGHWATRPRAPWTSVMRIPQHLSDQEAASFPTVFATAYIALHETARLQRGESILIHAATGGVGQAAIQLAQLIGAEIYATASTPAKRQLLHETYGIPENNIFSSRDPSFATDVHLRTDGRGVDVVLNSLAGRLLQESFNCLAEFGRMVEIGKRDLEQHSGLDMYPFTRNVSFSSVDLLTWQSRRGADISCVLQSLSKLLGEKKIMPVYPLTLYPITQIEKAFRTMQTGQHMGKIIISVGEQDTVPVVERPPPFSLRSDASYVIVGGLGGIGRVLCEWMMARGARHLIIISRNARPGPFVTELEQQGCEVRTLACDIAAEDQLAAALAQCADMPPIKGVIQGAMVLKDTVLEQMTVGDFEAAVRPKAQGSWNLHQQLGDVDFFIMLSSLMGVMGAASQANYAAGGAFQDALATYRRNRGLPAVSLDLGIVRSVGFVAQTDGVQERLVQMGVTSLSEETVLRILEQAITHPTGPPQIITGINTAPGKHWDEASWIQDPRFAALRYRDSTQAGSSRATTGTAKQGKIRDQLAEIASPVDAAALICQELMQKLASMFGLVVEEMSATQDLSSYGVDSLVAVELRNWLVAQVGAEVSIFDLMQSPSLEDLSLRVATKRT</sequence>
<protein>
    <recommendedName>
        <fullName evidence="6">Highly reducing polyketide synthase azaB</fullName>
        <shortName evidence="6">HR-PKS azaB</shortName>
        <ecNumber evidence="5">2.3.1.-</ecNumber>
    </recommendedName>
    <alternativeName>
        <fullName evidence="6">Azaphilone biosynthesis cluster protein azaB</fullName>
    </alternativeName>
</protein>
<dbReference type="EC" id="2.3.1.-" evidence="5"/>
<dbReference type="EMBL" id="ACJE01000001">
    <property type="protein sequence ID" value="EHA28244.1"/>
    <property type="molecule type" value="Genomic_DNA"/>
</dbReference>
<dbReference type="SMR" id="G3XMD1"/>
<dbReference type="STRING" id="380704.G3XMD1"/>
<dbReference type="VEuPathDB" id="FungiDB:ASPNIDRAFT2_1148627"/>
<dbReference type="HOGENOM" id="CLU_000022_31_0_1"/>
<dbReference type="OrthoDB" id="60940at5052"/>
<dbReference type="Proteomes" id="UP000009038">
    <property type="component" value="Unassembled WGS sequence"/>
</dbReference>
<dbReference type="GO" id="GO:0004315">
    <property type="term" value="F:3-oxoacyl-[acyl-carrier-protein] synthase activity"/>
    <property type="evidence" value="ECO:0007669"/>
    <property type="project" value="InterPro"/>
</dbReference>
<dbReference type="GO" id="GO:0004312">
    <property type="term" value="F:fatty acid synthase activity"/>
    <property type="evidence" value="ECO:0007669"/>
    <property type="project" value="TreeGrafter"/>
</dbReference>
<dbReference type="GO" id="GO:0008168">
    <property type="term" value="F:methyltransferase activity"/>
    <property type="evidence" value="ECO:0007669"/>
    <property type="project" value="UniProtKB-KW"/>
</dbReference>
<dbReference type="GO" id="GO:0016491">
    <property type="term" value="F:oxidoreductase activity"/>
    <property type="evidence" value="ECO:0007669"/>
    <property type="project" value="UniProtKB-KW"/>
</dbReference>
<dbReference type="GO" id="GO:0031177">
    <property type="term" value="F:phosphopantetheine binding"/>
    <property type="evidence" value="ECO:0007669"/>
    <property type="project" value="InterPro"/>
</dbReference>
<dbReference type="GO" id="GO:0006633">
    <property type="term" value="P:fatty acid biosynthetic process"/>
    <property type="evidence" value="ECO:0007669"/>
    <property type="project" value="InterPro"/>
</dbReference>
<dbReference type="GO" id="GO:0032259">
    <property type="term" value="P:methylation"/>
    <property type="evidence" value="ECO:0007669"/>
    <property type="project" value="UniProtKB-KW"/>
</dbReference>
<dbReference type="GO" id="GO:0030639">
    <property type="term" value="P:polyketide biosynthetic process"/>
    <property type="evidence" value="ECO:0007669"/>
    <property type="project" value="UniProtKB-ARBA"/>
</dbReference>
<dbReference type="CDD" id="cd02440">
    <property type="entry name" value="AdoMet_MTases"/>
    <property type="match status" value="1"/>
</dbReference>
<dbReference type="CDD" id="cd05195">
    <property type="entry name" value="enoyl_red"/>
    <property type="match status" value="1"/>
</dbReference>
<dbReference type="CDD" id="cd00833">
    <property type="entry name" value="PKS"/>
    <property type="match status" value="1"/>
</dbReference>
<dbReference type="FunFam" id="3.40.50.720:FF:000209">
    <property type="entry name" value="Polyketide synthase Pks12"/>
    <property type="match status" value="1"/>
</dbReference>
<dbReference type="FunFam" id="3.40.47.10:FF:000019">
    <property type="entry name" value="Polyketide synthase type I"/>
    <property type="match status" value="1"/>
</dbReference>
<dbReference type="Gene3D" id="3.30.70.3290">
    <property type="match status" value="1"/>
</dbReference>
<dbReference type="Gene3D" id="3.40.47.10">
    <property type="match status" value="1"/>
</dbReference>
<dbReference type="Gene3D" id="1.10.1200.10">
    <property type="entry name" value="ACP-like"/>
    <property type="match status" value="1"/>
</dbReference>
<dbReference type="Gene3D" id="3.40.366.10">
    <property type="entry name" value="Malonyl-Coenzyme A Acyl Carrier Protein, domain 2"/>
    <property type="match status" value="1"/>
</dbReference>
<dbReference type="Gene3D" id="3.90.180.10">
    <property type="entry name" value="Medium-chain alcohol dehydrogenases, catalytic domain"/>
    <property type="match status" value="1"/>
</dbReference>
<dbReference type="Gene3D" id="3.40.50.720">
    <property type="entry name" value="NAD(P)-binding Rossmann-like Domain"/>
    <property type="match status" value="1"/>
</dbReference>
<dbReference type="Gene3D" id="3.10.129.110">
    <property type="entry name" value="Polyketide synthase dehydratase"/>
    <property type="match status" value="1"/>
</dbReference>
<dbReference type="Gene3D" id="3.40.50.150">
    <property type="entry name" value="Vaccinia Virus protein VP39"/>
    <property type="match status" value="1"/>
</dbReference>
<dbReference type="InterPro" id="IPR001227">
    <property type="entry name" value="Ac_transferase_dom_sf"/>
</dbReference>
<dbReference type="InterPro" id="IPR036736">
    <property type="entry name" value="ACP-like_sf"/>
</dbReference>
<dbReference type="InterPro" id="IPR014043">
    <property type="entry name" value="Acyl_transferase_dom"/>
</dbReference>
<dbReference type="InterPro" id="IPR016035">
    <property type="entry name" value="Acyl_Trfase/lysoPLipase"/>
</dbReference>
<dbReference type="InterPro" id="IPR013149">
    <property type="entry name" value="ADH-like_C"/>
</dbReference>
<dbReference type="InterPro" id="IPR013154">
    <property type="entry name" value="ADH-like_N"/>
</dbReference>
<dbReference type="InterPro" id="IPR011032">
    <property type="entry name" value="GroES-like_sf"/>
</dbReference>
<dbReference type="InterPro" id="IPR018201">
    <property type="entry name" value="Ketoacyl_synth_AS"/>
</dbReference>
<dbReference type="InterPro" id="IPR014031">
    <property type="entry name" value="Ketoacyl_synth_C"/>
</dbReference>
<dbReference type="InterPro" id="IPR014030">
    <property type="entry name" value="Ketoacyl_synth_N"/>
</dbReference>
<dbReference type="InterPro" id="IPR016036">
    <property type="entry name" value="Malonyl_transacylase_ACP-bd"/>
</dbReference>
<dbReference type="InterPro" id="IPR013217">
    <property type="entry name" value="Methyltransf_12"/>
</dbReference>
<dbReference type="InterPro" id="IPR036291">
    <property type="entry name" value="NAD(P)-bd_dom_sf"/>
</dbReference>
<dbReference type="InterPro" id="IPR056501">
    <property type="entry name" value="NAD-bd_HRPKS_sdrA"/>
</dbReference>
<dbReference type="InterPro" id="IPR032821">
    <property type="entry name" value="PKS_assoc"/>
</dbReference>
<dbReference type="InterPro" id="IPR020841">
    <property type="entry name" value="PKS_Beta-ketoAc_synthase_dom"/>
</dbReference>
<dbReference type="InterPro" id="IPR042104">
    <property type="entry name" value="PKS_dehydratase_sf"/>
</dbReference>
<dbReference type="InterPro" id="IPR020807">
    <property type="entry name" value="PKS_DH"/>
</dbReference>
<dbReference type="InterPro" id="IPR049551">
    <property type="entry name" value="PKS_DH_C"/>
</dbReference>
<dbReference type="InterPro" id="IPR049552">
    <property type="entry name" value="PKS_DH_N"/>
</dbReference>
<dbReference type="InterPro" id="IPR020843">
    <property type="entry name" value="PKS_ER"/>
</dbReference>
<dbReference type="InterPro" id="IPR013968">
    <property type="entry name" value="PKS_KR"/>
</dbReference>
<dbReference type="InterPro" id="IPR049900">
    <property type="entry name" value="PKS_mFAS_DH"/>
</dbReference>
<dbReference type="InterPro" id="IPR050091">
    <property type="entry name" value="PKS_NRPS_Biosynth_Enz"/>
</dbReference>
<dbReference type="InterPro" id="IPR020806">
    <property type="entry name" value="PKS_PP-bd"/>
</dbReference>
<dbReference type="InterPro" id="IPR009081">
    <property type="entry name" value="PP-bd_ACP"/>
</dbReference>
<dbReference type="InterPro" id="IPR006162">
    <property type="entry name" value="Ppantetheine_attach_site"/>
</dbReference>
<dbReference type="InterPro" id="IPR029063">
    <property type="entry name" value="SAM-dependent_MTases_sf"/>
</dbReference>
<dbReference type="InterPro" id="IPR016039">
    <property type="entry name" value="Thiolase-like"/>
</dbReference>
<dbReference type="PANTHER" id="PTHR43775:SF29">
    <property type="entry name" value="ASPERFURANONE POLYKETIDE SYNTHASE AFOG-RELATED"/>
    <property type="match status" value="1"/>
</dbReference>
<dbReference type="PANTHER" id="PTHR43775">
    <property type="entry name" value="FATTY ACID SYNTHASE"/>
    <property type="match status" value="1"/>
</dbReference>
<dbReference type="Pfam" id="PF00698">
    <property type="entry name" value="Acyl_transf_1"/>
    <property type="match status" value="1"/>
</dbReference>
<dbReference type="Pfam" id="PF08240">
    <property type="entry name" value="ADH_N"/>
    <property type="match status" value="1"/>
</dbReference>
<dbReference type="Pfam" id="PF00107">
    <property type="entry name" value="ADH_zinc_N"/>
    <property type="match status" value="1"/>
</dbReference>
<dbReference type="Pfam" id="PF16197">
    <property type="entry name" value="KAsynt_C_assoc"/>
    <property type="match status" value="1"/>
</dbReference>
<dbReference type="Pfam" id="PF00109">
    <property type="entry name" value="ketoacyl-synt"/>
    <property type="match status" value="1"/>
</dbReference>
<dbReference type="Pfam" id="PF02801">
    <property type="entry name" value="Ketoacyl-synt_C"/>
    <property type="match status" value="1"/>
</dbReference>
<dbReference type="Pfam" id="PF08659">
    <property type="entry name" value="KR"/>
    <property type="match status" value="1"/>
</dbReference>
<dbReference type="Pfam" id="PF08242">
    <property type="entry name" value="Methyltransf_12"/>
    <property type="match status" value="1"/>
</dbReference>
<dbReference type="Pfam" id="PF23114">
    <property type="entry name" value="NAD-bd_HRPKS_sdrA"/>
    <property type="match status" value="1"/>
</dbReference>
<dbReference type="Pfam" id="PF21089">
    <property type="entry name" value="PKS_DH_N"/>
    <property type="match status" value="1"/>
</dbReference>
<dbReference type="Pfam" id="PF00550">
    <property type="entry name" value="PP-binding"/>
    <property type="match status" value="1"/>
</dbReference>
<dbReference type="Pfam" id="PF14765">
    <property type="entry name" value="PS-DH"/>
    <property type="match status" value="1"/>
</dbReference>
<dbReference type="SMART" id="SM00827">
    <property type="entry name" value="PKS_AT"/>
    <property type="match status" value="1"/>
</dbReference>
<dbReference type="SMART" id="SM00826">
    <property type="entry name" value="PKS_DH"/>
    <property type="match status" value="1"/>
</dbReference>
<dbReference type="SMART" id="SM00829">
    <property type="entry name" value="PKS_ER"/>
    <property type="match status" value="1"/>
</dbReference>
<dbReference type="SMART" id="SM00822">
    <property type="entry name" value="PKS_KR"/>
    <property type="match status" value="1"/>
</dbReference>
<dbReference type="SMART" id="SM00825">
    <property type="entry name" value="PKS_KS"/>
    <property type="match status" value="1"/>
</dbReference>
<dbReference type="SMART" id="SM00823">
    <property type="entry name" value="PKS_PP"/>
    <property type="match status" value="1"/>
</dbReference>
<dbReference type="SUPFAM" id="SSF47336">
    <property type="entry name" value="ACP-like"/>
    <property type="match status" value="1"/>
</dbReference>
<dbReference type="SUPFAM" id="SSF52151">
    <property type="entry name" value="FabD/lysophospholipase-like"/>
    <property type="match status" value="1"/>
</dbReference>
<dbReference type="SUPFAM" id="SSF50129">
    <property type="entry name" value="GroES-like"/>
    <property type="match status" value="1"/>
</dbReference>
<dbReference type="SUPFAM" id="SSF51735">
    <property type="entry name" value="NAD(P)-binding Rossmann-fold domains"/>
    <property type="match status" value="2"/>
</dbReference>
<dbReference type="SUPFAM" id="SSF55048">
    <property type="entry name" value="Probable ACP-binding domain of malonyl-CoA ACP transacylase"/>
    <property type="match status" value="1"/>
</dbReference>
<dbReference type="SUPFAM" id="SSF53335">
    <property type="entry name" value="S-adenosyl-L-methionine-dependent methyltransferases"/>
    <property type="match status" value="1"/>
</dbReference>
<dbReference type="SUPFAM" id="SSF53901">
    <property type="entry name" value="Thiolase-like"/>
    <property type="match status" value="1"/>
</dbReference>
<dbReference type="PROSITE" id="PS50075">
    <property type="entry name" value="CARRIER"/>
    <property type="match status" value="1"/>
</dbReference>
<dbReference type="PROSITE" id="PS00606">
    <property type="entry name" value="KS3_1"/>
    <property type="match status" value="1"/>
</dbReference>
<dbReference type="PROSITE" id="PS52004">
    <property type="entry name" value="KS3_2"/>
    <property type="match status" value="1"/>
</dbReference>
<dbReference type="PROSITE" id="PS00012">
    <property type="entry name" value="PHOSPHOPANTETHEINE"/>
    <property type="match status" value="1"/>
</dbReference>
<dbReference type="PROSITE" id="PS52019">
    <property type="entry name" value="PKS_MFAS_DH"/>
    <property type="match status" value="1"/>
</dbReference>
<organism>
    <name type="scientific">Aspergillus niger (strain ATCC 1015 / CBS 113.46 / FGSC A1144 / LSHB Ac4 / NCTC 3858a / NRRL 328 / USDA 3528.7)</name>
    <dbReference type="NCBI Taxonomy" id="380704"/>
    <lineage>
        <taxon>Eukaryota</taxon>
        <taxon>Fungi</taxon>
        <taxon>Dikarya</taxon>
        <taxon>Ascomycota</taxon>
        <taxon>Pezizomycotina</taxon>
        <taxon>Eurotiomycetes</taxon>
        <taxon>Eurotiomycetidae</taxon>
        <taxon>Eurotiales</taxon>
        <taxon>Aspergillaceae</taxon>
        <taxon>Aspergillus</taxon>
        <taxon>Aspergillus subgen. Circumdati</taxon>
    </lineage>
</organism>
<proteinExistence type="evidence at protein level"/>